<evidence type="ECO:0000255" key="1">
    <source>
        <dbReference type="HAMAP-Rule" id="MF_00196"/>
    </source>
</evidence>
<name>MTLD_ECOSM</name>
<keyword id="KW-0007">Acetylation</keyword>
<keyword id="KW-0520">NAD</keyword>
<keyword id="KW-0560">Oxidoreductase</keyword>
<accession>B1LK35</accession>
<feature type="chain" id="PRO_1000118658" description="Mannitol-1-phosphate 5-dehydrogenase">
    <location>
        <begin position="1"/>
        <end position="382"/>
    </location>
</feature>
<feature type="binding site" evidence="1">
    <location>
        <begin position="3"/>
        <end position="14"/>
    </location>
    <ligand>
        <name>NAD(+)</name>
        <dbReference type="ChEBI" id="CHEBI:57540"/>
    </ligand>
</feature>
<feature type="modified residue" description="N6-acetyllysine" evidence="1">
    <location>
        <position position="269"/>
    </location>
</feature>
<sequence length="382" mass="41124">MKALHFGAGNIGRGFIGKLLADAGIQLTFADVNQVVLDALNARHSYQVHVVGETEQVDTVSGVNAVSSIGDDVVDLIAQVDLVTTAVGPVVLERIAPAIAKGLVKRKEQGNESPLNIIACENMVRGTTQLKGHVMNALPEDAKAWVEEHVGFVDSAVDRIVPPSASATNDPLEVTVETFSEWIVDKTQFKGALPNIPGMELTDNLMAFVERKLFTLNTGHAITAYLGKLAGHQTIRDAILDEKIRAVVKGAMEESGAVLIKRYGFDADKHAAYIQKILGRFENPYLKDDVERVGRQPLRKLSAGDRLIKPLLGTLEYGLPHKNLIEGIAAAMHFRSEDDPQAQELAALIADKGPQAALAQISGLDANSEVVSEAVTAYKAMQ</sequence>
<gene>
    <name evidence="1" type="primary">mtlD</name>
    <name type="ordered locus">EcSMS35_3933</name>
</gene>
<organism>
    <name type="scientific">Escherichia coli (strain SMS-3-5 / SECEC)</name>
    <dbReference type="NCBI Taxonomy" id="439855"/>
    <lineage>
        <taxon>Bacteria</taxon>
        <taxon>Pseudomonadati</taxon>
        <taxon>Pseudomonadota</taxon>
        <taxon>Gammaproteobacteria</taxon>
        <taxon>Enterobacterales</taxon>
        <taxon>Enterobacteriaceae</taxon>
        <taxon>Escherichia</taxon>
    </lineage>
</organism>
<reference key="1">
    <citation type="journal article" date="2008" name="J. Bacteriol.">
        <title>Insights into the environmental resistance gene pool from the genome sequence of the multidrug-resistant environmental isolate Escherichia coli SMS-3-5.</title>
        <authorList>
            <person name="Fricke W.F."/>
            <person name="Wright M.S."/>
            <person name="Lindell A.H."/>
            <person name="Harkins D.M."/>
            <person name="Baker-Austin C."/>
            <person name="Ravel J."/>
            <person name="Stepanauskas R."/>
        </authorList>
    </citation>
    <scope>NUCLEOTIDE SEQUENCE [LARGE SCALE GENOMIC DNA]</scope>
    <source>
        <strain>SMS-3-5 / SECEC</strain>
    </source>
</reference>
<dbReference type="EC" id="1.1.1.17" evidence="1"/>
<dbReference type="EMBL" id="CP000970">
    <property type="protein sequence ID" value="ACB17167.1"/>
    <property type="molecule type" value="Genomic_DNA"/>
</dbReference>
<dbReference type="RefSeq" id="WP_000645420.1">
    <property type="nucleotide sequence ID" value="NC_010498.1"/>
</dbReference>
<dbReference type="SMR" id="B1LK35"/>
<dbReference type="KEGG" id="ecm:EcSMS35_3933"/>
<dbReference type="HOGENOM" id="CLU_036089_2_0_6"/>
<dbReference type="Proteomes" id="UP000007011">
    <property type="component" value="Chromosome"/>
</dbReference>
<dbReference type="GO" id="GO:0005829">
    <property type="term" value="C:cytosol"/>
    <property type="evidence" value="ECO:0007669"/>
    <property type="project" value="TreeGrafter"/>
</dbReference>
<dbReference type="GO" id="GO:0008926">
    <property type="term" value="F:mannitol-1-phosphate 5-dehydrogenase activity"/>
    <property type="evidence" value="ECO:0007669"/>
    <property type="project" value="UniProtKB-UniRule"/>
</dbReference>
<dbReference type="GO" id="GO:0019592">
    <property type="term" value="P:mannitol catabolic process"/>
    <property type="evidence" value="ECO:0007669"/>
    <property type="project" value="TreeGrafter"/>
</dbReference>
<dbReference type="FunFam" id="1.10.1040.10:FF:000009">
    <property type="entry name" value="Mannitol-1-phosphate 5-dehydrogenase"/>
    <property type="match status" value="1"/>
</dbReference>
<dbReference type="FunFam" id="3.40.50.720:FF:000075">
    <property type="entry name" value="Mannitol-1-phosphate 5-dehydrogenase"/>
    <property type="match status" value="1"/>
</dbReference>
<dbReference type="Gene3D" id="1.10.1040.10">
    <property type="entry name" value="N-(1-d-carboxylethyl)-l-norvaline Dehydrogenase, domain 2"/>
    <property type="match status" value="1"/>
</dbReference>
<dbReference type="Gene3D" id="3.40.50.720">
    <property type="entry name" value="NAD(P)-binding Rossmann-like Domain"/>
    <property type="match status" value="1"/>
</dbReference>
<dbReference type="HAMAP" id="MF_00196">
    <property type="entry name" value="Mannitol_dehydrog"/>
    <property type="match status" value="1"/>
</dbReference>
<dbReference type="InterPro" id="IPR008927">
    <property type="entry name" value="6-PGluconate_DH-like_C_sf"/>
</dbReference>
<dbReference type="InterPro" id="IPR013328">
    <property type="entry name" value="6PGD_dom2"/>
</dbReference>
<dbReference type="InterPro" id="IPR023028">
    <property type="entry name" value="Mannitol_1_phos_5_DH"/>
</dbReference>
<dbReference type="InterPro" id="IPR000669">
    <property type="entry name" value="Mannitol_DH"/>
</dbReference>
<dbReference type="InterPro" id="IPR013118">
    <property type="entry name" value="Mannitol_DH_C"/>
</dbReference>
<dbReference type="InterPro" id="IPR023027">
    <property type="entry name" value="Mannitol_DH_CS"/>
</dbReference>
<dbReference type="InterPro" id="IPR013131">
    <property type="entry name" value="Mannitol_DH_N"/>
</dbReference>
<dbReference type="InterPro" id="IPR036291">
    <property type="entry name" value="NAD(P)-bd_dom_sf"/>
</dbReference>
<dbReference type="NCBIfam" id="NF002646">
    <property type="entry name" value="PRK02318.1-2"/>
    <property type="match status" value="1"/>
</dbReference>
<dbReference type="NCBIfam" id="NF002647">
    <property type="entry name" value="PRK02318.1-3"/>
    <property type="match status" value="1"/>
</dbReference>
<dbReference type="NCBIfam" id="NF002648">
    <property type="entry name" value="PRK02318.1-4"/>
    <property type="match status" value="1"/>
</dbReference>
<dbReference type="NCBIfam" id="NF002650">
    <property type="entry name" value="PRK02318.2-2"/>
    <property type="match status" value="1"/>
</dbReference>
<dbReference type="NCBIfam" id="NF002652">
    <property type="entry name" value="PRK02318.2-5"/>
    <property type="match status" value="1"/>
</dbReference>
<dbReference type="PANTHER" id="PTHR30524:SF0">
    <property type="entry name" value="ALTRONATE OXIDOREDUCTASE-RELATED"/>
    <property type="match status" value="1"/>
</dbReference>
<dbReference type="PANTHER" id="PTHR30524">
    <property type="entry name" value="MANNITOL-1-PHOSPHATE 5-DEHYDROGENASE"/>
    <property type="match status" value="1"/>
</dbReference>
<dbReference type="Pfam" id="PF01232">
    <property type="entry name" value="Mannitol_dh"/>
    <property type="match status" value="1"/>
</dbReference>
<dbReference type="Pfam" id="PF08125">
    <property type="entry name" value="Mannitol_dh_C"/>
    <property type="match status" value="1"/>
</dbReference>
<dbReference type="PRINTS" id="PR00084">
    <property type="entry name" value="MTLDHDRGNASE"/>
</dbReference>
<dbReference type="SUPFAM" id="SSF48179">
    <property type="entry name" value="6-phosphogluconate dehydrogenase C-terminal domain-like"/>
    <property type="match status" value="1"/>
</dbReference>
<dbReference type="SUPFAM" id="SSF51735">
    <property type="entry name" value="NAD(P)-binding Rossmann-fold domains"/>
    <property type="match status" value="1"/>
</dbReference>
<dbReference type="PROSITE" id="PS00974">
    <property type="entry name" value="MANNITOL_DHGENASE"/>
    <property type="match status" value="1"/>
</dbReference>
<comment type="catalytic activity">
    <reaction evidence="1">
        <text>D-mannitol 1-phosphate + NAD(+) = beta-D-fructose 6-phosphate + NADH + H(+)</text>
        <dbReference type="Rhea" id="RHEA:19661"/>
        <dbReference type="ChEBI" id="CHEBI:15378"/>
        <dbReference type="ChEBI" id="CHEBI:57540"/>
        <dbReference type="ChEBI" id="CHEBI:57634"/>
        <dbReference type="ChEBI" id="CHEBI:57945"/>
        <dbReference type="ChEBI" id="CHEBI:61381"/>
        <dbReference type="EC" id="1.1.1.17"/>
    </reaction>
</comment>
<comment type="similarity">
    <text evidence="1">Belongs to the mannitol dehydrogenase family.</text>
</comment>
<proteinExistence type="inferred from homology"/>
<protein>
    <recommendedName>
        <fullName evidence="1">Mannitol-1-phosphate 5-dehydrogenase</fullName>
        <ecNumber evidence="1">1.1.1.17</ecNumber>
    </recommendedName>
</protein>